<keyword id="KW-0067">ATP-binding</keyword>
<keyword id="KW-0997">Cell inner membrane</keyword>
<keyword id="KW-1003">Cell membrane</keyword>
<keyword id="KW-0418">Kinase</keyword>
<keyword id="KW-0472">Membrane</keyword>
<keyword id="KW-0547">Nucleotide-binding</keyword>
<keyword id="KW-0808">Transferase</keyword>
<keyword id="KW-0812">Transmembrane</keyword>
<keyword id="KW-1133">Transmembrane helix</keyword>
<keyword id="KW-0831">Ubiquinone biosynthesis</keyword>
<sequence>MTPGEVRRLYFIIRTFLSYGLDELIPKMRITLPLRLWRYSLFWMPNRHKDKLLGERLRLALQELGPVWIKFGQMLSTRRDLFPPHIADQLALLQDKVAPFDGKLAKQQIEAAMGGLPVEAWFDDFEIKPLASASIAQVHTARLKSNGKEVVIKVIRPDILPVIKADLKLIYRLARWVPRLLPDGRRLRPTEVVREYEKTLIDELNLLRESANAIQLRRNFEDSPMLYIPEVYPDYCSEGMMVMERIYGIPVSDVAALEKNGTNMKLLAERGVQVFFTQVFRDSFFHADMHPGNIFVSYEHPENPKYIGIDCGIVGSLNKEDKRYLAENFIAFFNRDYRKVAELHVDSGWVPPDTNVEEFEFAIRTVCEPIFEKPLAEISFGHVLLNLFNTARRFNMEVQPQLVLLQKTLLYVEGVGRQLYPQLDLWKTAKPFLESWIKDQVGIPALVRAFKEKAPFWVEKMPELPELVYDSLRQGKYLQHSVDKIARELQSNHVRQGQSRYFLGIGATLVLSGTFLLVSRPEWGLMPGWLMAGGLIAWFVGWRKTR</sequence>
<accession>Q31UF1</accession>
<name>UBIB_SHIBS</name>
<evidence type="ECO:0000255" key="1">
    <source>
        <dbReference type="HAMAP-Rule" id="MF_00414"/>
    </source>
</evidence>
<feature type="chain" id="PRO_1000050064" description="Probable protein kinase UbiB">
    <location>
        <begin position="1"/>
        <end position="546"/>
    </location>
</feature>
<feature type="transmembrane region" description="Helical" evidence="1">
    <location>
        <begin position="501"/>
        <end position="521"/>
    </location>
</feature>
<feature type="transmembrane region" description="Helical" evidence="1">
    <location>
        <begin position="522"/>
        <end position="542"/>
    </location>
</feature>
<feature type="domain" description="Protein kinase" evidence="1">
    <location>
        <begin position="124"/>
        <end position="502"/>
    </location>
</feature>
<feature type="active site" description="Proton acceptor" evidence="1">
    <location>
        <position position="288"/>
    </location>
</feature>
<feature type="binding site" evidence="1">
    <location>
        <begin position="130"/>
        <end position="138"/>
    </location>
    <ligand>
        <name>ATP</name>
        <dbReference type="ChEBI" id="CHEBI:30616"/>
    </ligand>
</feature>
<feature type="binding site" evidence="1">
    <location>
        <position position="153"/>
    </location>
    <ligand>
        <name>ATP</name>
        <dbReference type="ChEBI" id="CHEBI:30616"/>
    </ligand>
</feature>
<dbReference type="EC" id="2.7.-.-" evidence="1"/>
<dbReference type="EMBL" id="CP000036">
    <property type="protein sequence ID" value="ABB68307.1"/>
    <property type="molecule type" value="Genomic_DNA"/>
</dbReference>
<dbReference type="RefSeq" id="WP_000187530.1">
    <property type="nucleotide sequence ID" value="NC_007613.1"/>
</dbReference>
<dbReference type="SMR" id="Q31UF1"/>
<dbReference type="GeneID" id="75204829"/>
<dbReference type="KEGG" id="sbo:SBO_3849"/>
<dbReference type="HOGENOM" id="CLU_006533_0_0_6"/>
<dbReference type="UniPathway" id="UPA00232"/>
<dbReference type="Proteomes" id="UP000007067">
    <property type="component" value="Chromosome"/>
</dbReference>
<dbReference type="GO" id="GO:0005886">
    <property type="term" value="C:plasma membrane"/>
    <property type="evidence" value="ECO:0007669"/>
    <property type="project" value="UniProtKB-SubCell"/>
</dbReference>
<dbReference type="GO" id="GO:0005524">
    <property type="term" value="F:ATP binding"/>
    <property type="evidence" value="ECO:0007669"/>
    <property type="project" value="UniProtKB-KW"/>
</dbReference>
<dbReference type="GO" id="GO:0004672">
    <property type="term" value="F:protein kinase activity"/>
    <property type="evidence" value="ECO:0007669"/>
    <property type="project" value="UniProtKB-UniRule"/>
</dbReference>
<dbReference type="GO" id="GO:0010795">
    <property type="term" value="P:regulation of ubiquinone biosynthetic process"/>
    <property type="evidence" value="ECO:0007669"/>
    <property type="project" value="UniProtKB-UniRule"/>
</dbReference>
<dbReference type="GO" id="GO:0006744">
    <property type="term" value="P:ubiquinone biosynthetic process"/>
    <property type="evidence" value="ECO:0007669"/>
    <property type="project" value="UniProtKB-UniPathway"/>
</dbReference>
<dbReference type="CDD" id="cd13972">
    <property type="entry name" value="UbiB"/>
    <property type="match status" value="1"/>
</dbReference>
<dbReference type="HAMAP" id="MF_00414">
    <property type="entry name" value="UbiB"/>
    <property type="match status" value="1"/>
</dbReference>
<dbReference type="InterPro" id="IPR004147">
    <property type="entry name" value="ABC1_dom"/>
</dbReference>
<dbReference type="InterPro" id="IPR011009">
    <property type="entry name" value="Kinase-like_dom_sf"/>
</dbReference>
<dbReference type="InterPro" id="IPR010232">
    <property type="entry name" value="UbiB"/>
</dbReference>
<dbReference type="InterPro" id="IPR045308">
    <property type="entry name" value="UbiB_bact"/>
</dbReference>
<dbReference type="InterPro" id="IPR050154">
    <property type="entry name" value="UbiB_kinase"/>
</dbReference>
<dbReference type="NCBIfam" id="NF003404">
    <property type="entry name" value="PRK04750.1"/>
    <property type="match status" value="1"/>
</dbReference>
<dbReference type="NCBIfam" id="TIGR01982">
    <property type="entry name" value="UbiB"/>
    <property type="match status" value="1"/>
</dbReference>
<dbReference type="PANTHER" id="PTHR10566">
    <property type="entry name" value="CHAPERONE-ACTIVITY OF BC1 COMPLEX CABC1 -RELATED"/>
    <property type="match status" value="1"/>
</dbReference>
<dbReference type="PANTHER" id="PTHR10566:SF113">
    <property type="entry name" value="PROTEIN ACTIVITY OF BC1 COMPLEX KINASE 7, CHLOROPLASTIC"/>
    <property type="match status" value="1"/>
</dbReference>
<dbReference type="Pfam" id="PF03109">
    <property type="entry name" value="ABC1"/>
    <property type="match status" value="1"/>
</dbReference>
<dbReference type="SUPFAM" id="SSF56112">
    <property type="entry name" value="Protein kinase-like (PK-like)"/>
    <property type="match status" value="1"/>
</dbReference>
<reference key="1">
    <citation type="journal article" date="2005" name="Nucleic Acids Res.">
        <title>Genome dynamics and diversity of Shigella species, the etiologic agents of bacillary dysentery.</title>
        <authorList>
            <person name="Yang F."/>
            <person name="Yang J."/>
            <person name="Zhang X."/>
            <person name="Chen L."/>
            <person name="Jiang Y."/>
            <person name="Yan Y."/>
            <person name="Tang X."/>
            <person name="Wang J."/>
            <person name="Xiong Z."/>
            <person name="Dong J."/>
            <person name="Xue Y."/>
            <person name="Zhu Y."/>
            <person name="Xu X."/>
            <person name="Sun L."/>
            <person name="Chen S."/>
            <person name="Nie H."/>
            <person name="Peng J."/>
            <person name="Xu J."/>
            <person name="Wang Y."/>
            <person name="Yuan Z."/>
            <person name="Wen Y."/>
            <person name="Yao Z."/>
            <person name="Shen Y."/>
            <person name="Qiang B."/>
            <person name="Hou Y."/>
            <person name="Yu J."/>
            <person name="Jin Q."/>
        </authorList>
    </citation>
    <scope>NUCLEOTIDE SEQUENCE [LARGE SCALE GENOMIC DNA]</scope>
    <source>
        <strain>Sb227</strain>
    </source>
</reference>
<protein>
    <recommendedName>
        <fullName evidence="1">Probable protein kinase UbiB</fullName>
        <ecNumber evidence="1">2.7.-.-</ecNumber>
    </recommendedName>
    <alternativeName>
        <fullName evidence="1">Ubiquinone biosynthesis protein UbiB</fullName>
    </alternativeName>
</protein>
<organism>
    <name type="scientific">Shigella boydii serotype 4 (strain Sb227)</name>
    <dbReference type="NCBI Taxonomy" id="300268"/>
    <lineage>
        <taxon>Bacteria</taxon>
        <taxon>Pseudomonadati</taxon>
        <taxon>Pseudomonadota</taxon>
        <taxon>Gammaproteobacteria</taxon>
        <taxon>Enterobacterales</taxon>
        <taxon>Enterobacteriaceae</taxon>
        <taxon>Shigella</taxon>
    </lineage>
</organism>
<comment type="function">
    <text evidence="1">Is probably a protein kinase regulator of UbiI activity which is involved in aerobic coenzyme Q (ubiquinone) biosynthesis.</text>
</comment>
<comment type="pathway">
    <text>Cofactor biosynthesis; ubiquinone biosynthesis [regulation].</text>
</comment>
<comment type="subcellular location">
    <subcellularLocation>
        <location evidence="1">Cell inner membrane</location>
        <topology evidence="1">Multi-pass membrane protein</topology>
    </subcellularLocation>
</comment>
<comment type="similarity">
    <text evidence="1">Belongs to the ABC1 family. UbiB subfamily.</text>
</comment>
<proteinExistence type="inferred from homology"/>
<gene>
    <name evidence="1" type="primary">ubiB</name>
    <name type="ordered locus">SBO_3849</name>
</gene>